<organism>
    <name type="scientific">Arabidopsis thaliana</name>
    <name type="common">Mouse-ear cress</name>
    <dbReference type="NCBI Taxonomy" id="3702"/>
    <lineage>
        <taxon>Eukaryota</taxon>
        <taxon>Viridiplantae</taxon>
        <taxon>Streptophyta</taxon>
        <taxon>Embryophyta</taxon>
        <taxon>Tracheophyta</taxon>
        <taxon>Spermatophyta</taxon>
        <taxon>Magnoliopsida</taxon>
        <taxon>eudicotyledons</taxon>
        <taxon>Gunneridae</taxon>
        <taxon>Pentapetalae</taxon>
        <taxon>rosids</taxon>
        <taxon>malvids</taxon>
        <taxon>Brassicales</taxon>
        <taxon>Brassicaceae</taxon>
        <taxon>Camelineae</taxon>
        <taxon>Arabidopsis</taxon>
    </lineage>
</organism>
<evidence type="ECO:0000250" key="1"/>
<evidence type="ECO:0000250" key="2">
    <source>
        <dbReference type="UniProtKB" id="O48814"/>
    </source>
</evidence>
<evidence type="ECO:0000255" key="3"/>
<evidence type="ECO:0000255" key="4">
    <source>
        <dbReference type="PROSITE-ProRule" id="PRU00159"/>
    </source>
</evidence>
<evidence type="ECO:0000255" key="5">
    <source>
        <dbReference type="PROSITE-ProRule" id="PRU10027"/>
    </source>
</evidence>
<evidence type="ECO:0000256" key="6">
    <source>
        <dbReference type="SAM" id="MobiDB-lite"/>
    </source>
</evidence>
<evidence type="ECO:0000305" key="7"/>
<dbReference type="EC" id="2.7.11.-"/>
<dbReference type="EMBL" id="AL049914">
    <property type="status" value="NOT_ANNOTATED_CDS"/>
    <property type="molecule type" value="Genomic_DNA"/>
</dbReference>
<dbReference type="EMBL" id="AL161578">
    <property type="protein sequence ID" value="CAB79829.1"/>
    <property type="status" value="ALT_SEQ"/>
    <property type="molecule type" value="Genomic_DNA"/>
</dbReference>
<dbReference type="EMBL" id="CP002687">
    <property type="protein sequence ID" value="AEE85857.1"/>
    <property type="molecule type" value="Genomic_DNA"/>
</dbReference>
<dbReference type="EMBL" id="AK229301">
    <property type="protein sequence ID" value="BAF01164.1"/>
    <property type="molecule type" value="mRNA"/>
</dbReference>
<dbReference type="PIR" id="T10665">
    <property type="entry name" value="T10665"/>
</dbReference>
<dbReference type="RefSeq" id="NP_194840.3">
    <property type="nucleotide sequence ID" value="NM_119261.4"/>
</dbReference>
<dbReference type="SMR" id="Q0WNY5"/>
<dbReference type="BioGRID" id="14525">
    <property type="interactions" value="6"/>
</dbReference>
<dbReference type="IntAct" id="Q0WNY5">
    <property type="interactions" value="6"/>
</dbReference>
<dbReference type="STRING" id="3702.Q0WNY5"/>
<dbReference type="GlyCosmos" id="Q0WNY5">
    <property type="glycosylation" value="6 sites, No reported glycans"/>
</dbReference>
<dbReference type="GlyGen" id="Q0WNY5">
    <property type="glycosylation" value="6 sites"/>
</dbReference>
<dbReference type="iPTMnet" id="Q0WNY5"/>
<dbReference type="PaxDb" id="3702-AT4G31110.1"/>
<dbReference type="ProteomicsDB" id="242759"/>
<dbReference type="EnsemblPlants" id="AT4G31110.1">
    <property type="protein sequence ID" value="AT4G31110.1"/>
    <property type="gene ID" value="AT4G31110"/>
</dbReference>
<dbReference type="GeneID" id="829238"/>
<dbReference type="Gramene" id="AT4G31110.1">
    <property type="protein sequence ID" value="AT4G31110.1"/>
    <property type="gene ID" value="AT4G31110"/>
</dbReference>
<dbReference type="KEGG" id="ath:AT4G31110"/>
<dbReference type="Araport" id="AT4G31110"/>
<dbReference type="TAIR" id="AT4G31110"/>
<dbReference type="eggNOG" id="KOG1187">
    <property type="taxonomic scope" value="Eukaryota"/>
</dbReference>
<dbReference type="HOGENOM" id="CLU_000288_43_5_1"/>
<dbReference type="InParanoid" id="Q0WNY5"/>
<dbReference type="OMA" id="CSQAGIG"/>
<dbReference type="PhylomeDB" id="Q0WNY5"/>
<dbReference type="PRO" id="PR:Q0WNY5"/>
<dbReference type="Proteomes" id="UP000006548">
    <property type="component" value="Chromosome 4"/>
</dbReference>
<dbReference type="ExpressionAtlas" id="Q0WNY5">
    <property type="expression patterns" value="baseline and differential"/>
</dbReference>
<dbReference type="GO" id="GO:0016020">
    <property type="term" value="C:membrane"/>
    <property type="evidence" value="ECO:0007669"/>
    <property type="project" value="UniProtKB-SubCell"/>
</dbReference>
<dbReference type="GO" id="GO:0005524">
    <property type="term" value="F:ATP binding"/>
    <property type="evidence" value="ECO:0007669"/>
    <property type="project" value="UniProtKB-KW"/>
</dbReference>
<dbReference type="GO" id="GO:0005509">
    <property type="term" value="F:calcium ion binding"/>
    <property type="evidence" value="ECO:0007669"/>
    <property type="project" value="InterPro"/>
</dbReference>
<dbReference type="GO" id="GO:0030247">
    <property type="term" value="F:polysaccharide binding"/>
    <property type="evidence" value="ECO:0007669"/>
    <property type="project" value="InterPro"/>
</dbReference>
<dbReference type="GO" id="GO:0106310">
    <property type="term" value="F:protein serine kinase activity"/>
    <property type="evidence" value="ECO:0007669"/>
    <property type="project" value="RHEA"/>
</dbReference>
<dbReference type="GO" id="GO:0004674">
    <property type="term" value="F:protein serine/threonine kinase activity"/>
    <property type="evidence" value="ECO:0007669"/>
    <property type="project" value="UniProtKB-KW"/>
</dbReference>
<dbReference type="GO" id="GO:0007166">
    <property type="term" value="P:cell surface receptor signaling pathway"/>
    <property type="evidence" value="ECO:0007669"/>
    <property type="project" value="InterPro"/>
</dbReference>
<dbReference type="CDD" id="cd00054">
    <property type="entry name" value="EGF_CA"/>
    <property type="match status" value="1"/>
</dbReference>
<dbReference type="CDD" id="cd14066">
    <property type="entry name" value="STKc_IRAK"/>
    <property type="match status" value="1"/>
</dbReference>
<dbReference type="FunFam" id="1.10.510.10:FF:000084">
    <property type="entry name" value="Wall-associated receptor kinase 2"/>
    <property type="match status" value="1"/>
</dbReference>
<dbReference type="FunFam" id="3.30.200.20:FF:000043">
    <property type="entry name" value="Wall-associated receptor kinase 2"/>
    <property type="match status" value="1"/>
</dbReference>
<dbReference type="Gene3D" id="3.30.200.20">
    <property type="entry name" value="Phosphorylase Kinase, domain 1"/>
    <property type="match status" value="1"/>
</dbReference>
<dbReference type="Gene3D" id="2.90.20.10">
    <property type="entry name" value="Plasmodium vivax P25 domain"/>
    <property type="match status" value="1"/>
</dbReference>
<dbReference type="Gene3D" id="1.10.510.10">
    <property type="entry name" value="Transferase(Phosphotransferase) domain 1"/>
    <property type="match status" value="1"/>
</dbReference>
<dbReference type="InterPro" id="IPR018097">
    <property type="entry name" value="EGF_Ca-bd_CS"/>
</dbReference>
<dbReference type="InterPro" id="IPR011009">
    <property type="entry name" value="Kinase-like_dom_sf"/>
</dbReference>
<dbReference type="InterPro" id="IPR000719">
    <property type="entry name" value="Prot_kinase_dom"/>
</dbReference>
<dbReference type="InterPro" id="IPR001245">
    <property type="entry name" value="Ser-Thr/Tyr_kinase_cat_dom"/>
</dbReference>
<dbReference type="InterPro" id="IPR008271">
    <property type="entry name" value="Ser/Thr_kinase_AS"/>
</dbReference>
<dbReference type="InterPro" id="IPR013695">
    <property type="entry name" value="WAK"/>
</dbReference>
<dbReference type="InterPro" id="IPR045274">
    <property type="entry name" value="WAK-like"/>
</dbReference>
<dbReference type="InterPro" id="IPR025287">
    <property type="entry name" value="WAK_GUB"/>
</dbReference>
<dbReference type="PANTHER" id="PTHR27005:SF297">
    <property type="entry name" value="WALL-ASSOCIATED RECEPTOR KINASE-LIKE 17-RELATED"/>
    <property type="match status" value="1"/>
</dbReference>
<dbReference type="PANTHER" id="PTHR27005">
    <property type="entry name" value="WALL-ASSOCIATED RECEPTOR KINASE-LIKE 21"/>
    <property type="match status" value="1"/>
</dbReference>
<dbReference type="Pfam" id="PF13947">
    <property type="entry name" value="GUB_WAK_bind"/>
    <property type="match status" value="1"/>
</dbReference>
<dbReference type="Pfam" id="PF07714">
    <property type="entry name" value="PK_Tyr_Ser-Thr"/>
    <property type="match status" value="1"/>
</dbReference>
<dbReference type="Pfam" id="PF08488">
    <property type="entry name" value="WAK"/>
    <property type="match status" value="1"/>
</dbReference>
<dbReference type="SMART" id="SM00220">
    <property type="entry name" value="S_TKc"/>
    <property type="match status" value="1"/>
</dbReference>
<dbReference type="SUPFAM" id="SSF56112">
    <property type="entry name" value="Protein kinase-like (PK-like)"/>
    <property type="match status" value="1"/>
</dbReference>
<dbReference type="PROSITE" id="PS01187">
    <property type="entry name" value="EGF_CA"/>
    <property type="match status" value="1"/>
</dbReference>
<dbReference type="PROSITE" id="PS50011">
    <property type="entry name" value="PROTEIN_KINASE_DOM"/>
    <property type="match status" value="1"/>
</dbReference>
<dbReference type="PROSITE" id="PS00108">
    <property type="entry name" value="PROTEIN_KINASE_ST"/>
    <property type="match status" value="1"/>
</dbReference>
<sequence>MSNESTNCSFFLNLFMLLLLLIFYSADACQRECGGISIPYPFGIGKDCCLEKYYEIECRNTTSRKLVPLLSFINKEVVSISLPSADSHFAYEVSDQERHESFGLVRVKFPITSAGCFNDGKESGGGSKMNFTGSPFFIDRSNSLIAAGCNSKVSLMYIKPKMVGCELSCNTSKDSYSNSIPFVEAGCSSNVLPYSQDQGCPEEIAEETGCNGIGCCQASLPNEPQQVIGIRTENNDGNSTTKVECTVSAFLTDEIYALPKATKTEHLLAKRYATVSLGWVIQTSNRSFLDSLALACKDREDYRNTTNLERKCTCGRITISETSYANCGCTYGYTGNPYVLNGCKDIDECKVKFEYCGKTETCVNFEGGYRCVRDKTKAIMIGAGTGFGVLVLVGGLWWLRKFLIKRRITKRKKKFFKRNGGLLLLQELNTREGYVEKTRVFNSRELEKATENFSENRVLGHGGQGTVYKGMLVDGRTVAVKKSKVIDEDKLQEFINEVVILSQINHRHVVKLLGCCLETEVPMLVYEFIINGNLFKHIHEEESDDYTMLWGMRLRIAVDIAGALSYLHSSASSPIYHRDIKSTNILLDEKYRAKVADFGTSRSVTIDQTHWTTVISGTVGYVDPEYYQSSQYTEKSDVYSFGVILAELITGDKPVIMVQNTQEIVALAEHFRVAMKEKRLTDIIDARIRNDCKPEQVMAVAKVAMKCLSSKGKKRPNMREVFTELERICTSPEDSQVHNRIDEEEEEEEEEEEVVTTINRGDSWSISVTAPALSIVASSPSSDVEPLFPRLTW</sequence>
<reference key="1">
    <citation type="journal article" date="1999" name="Nature">
        <title>Sequence and analysis of chromosome 4 of the plant Arabidopsis thaliana.</title>
        <authorList>
            <person name="Mayer K.F.X."/>
            <person name="Schueller C."/>
            <person name="Wambutt R."/>
            <person name="Murphy G."/>
            <person name="Volckaert G."/>
            <person name="Pohl T."/>
            <person name="Duesterhoeft A."/>
            <person name="Stiekema W."/>
            <person name="Entian K.-D."/>
            <person name="Terryn N."/>
            <person name="Harris B."/>
            <person name="Ansorge W."/>
            <person name="Brandt P."/>
            <person name="Grivell L.A."/>
            <person name="Rieger M."/>
            <person name="Weichselgartner M."/>
            <person name="de Simone V."/>
            <person name="Obermaier B."/>
            <person name="Mache R."/>
            <person name="Mueller M."/>
            <person name="Kreis M."/>
            <person name="Delseny M."/>
            <person name="Puigdomenech P."/>
            <person name="Watson M."/>
            <person name="Schmidtheini T."/>
            <person name="Reichert B."/>
            <person name="Portetelle D."/>
            <person name="Perez-Alonso M."/>
            <person name="Boutry M."/>
            <person name="Bancroft I."/>
            <person name="Vos P."/>
            <person name="Hoheisel J."/>
            <person name="Zimmermann W."/>
            <person name="Wedler H."/>
            <person name="Ridley P."/>
            <person name="Langham S.-A."/>
            <person name="McCullagh B."/>
            <person name="Bilham L."/>
            <person name="Robben J."/>
            <person name="van der Schueren J."/>
            <person name="Grymonprez B."/>
            <person name="Chuang Y.-J."/>
            <person name="Vandenbussche F."/>
            <person name="Braeken M."/>
            <person name="Weltjens I."/>
            <person name="Voet M."/>
            <person name="Bastiaens I."/>
            <person name="Aert R."/>
            <person name="Defoor E."/>
            <person name="Weitzenegger T."/>
            <person name="Bothe G."/>
            <person name="Ramsperger U."/>
            <person name="Hilbert H."/>
            <person name="Braun M."/>
            <person name="Holzer E."/>
            <person name="Brandt A."/>
            <person name="Peters S."/>
            <person name="van Staveren M."/>
            <person name="Dirkse W."/>
            <person name="Mooijman P."/>
            <person name="Klein Lankhorst R."/>
            <person name="Rose M."/>
            <person name="Hauf J."/>
            <person name="Koetter P."/>
            <person name="Berneiser S."/>
            <person name="Hempel S."/>
            <person name="Feldpausch M."/>
            <person name="Lamberth S."/>
            <person name="Van den Daele H."/>
            <person name="De Keyser A."/>
            <person name="Buysshaert C."/>
            <person name="Gielen J."/>
            <person name="Villarroel R."/>
            <person name="De Clercq R."/>
            <person name="van Montagu M."/>
            <person name="Rogers J."/>
            <person name="Cronin A."/>
            <person name="Quail M.A."/>
            <person name="Bray-Allen S."/>
            <person name="Clark L."/>
            <person name="Doggett J."/>
            <person name="Hall S."/>
            <person name="Kay M."/>
            <person name="Lennard N."/>
            <person name="McLay K."/>
            <person name="Mayes R."/>
            <person name="Pettett A."/>
            <person name="Rajandream M.A."/>
            <person name="Lyne M."/>
            <person name="Benes V."/>
            <person name="Rechmann S."/>
            <person name="Borkova D."/>
            <person name="Bloecker H."/>
            <person name="Scharfe M."/>
            <person name="Grimm M."/>
            <person name="Loehnert T.-H."/>
            <person name="Dose S."/>
            <person name="de Haan M."/>
            <person name="Maarse A.C."/>
            <person name="Schaefer M."/>
            <person name="Mueller-Auer S."/>
            <person name="Gabel C."/>
            <person name="Fuchs M."/>
            <person name="Fartmann B."/>
            <person name="Granderath K."/>
            <person name="Dauner D."/>
            <person name="Herzl A."/>
            <person name="Neumann S."/>
            <person name="Argiriou A."/>
            <person name="Vitale D."/>
            <person name="Liguori R."/>
            <person name="Piravandi E."/>
            <person name="Massenet O."/>
            <person name="Quigley F."/>
            <person name="Clabauld G."/>
            <person name="Muendlein A."/>
            <person name="Felber R."/>
            <person name="Schnabl S."/>
            <person name="Hiller R."/>
            <person name="Schmidt W."/>
            <person name="Lecharny A."/>
            <person name="Aubourg S."/>
            <person name="Chefdor F."/>
            <person name="Cooke R."/>
            <person name="Berger C."/>
            <person name="Monfort A."/>
            <person name="Casacuberta E."/>
            <person name="Gibbons T."/>
            <person name="Weber N."/>
            <person name="Vandenbol M."/>
            <person name="Bargues M."/>
            <person name="Terol J."/>
            <person name="Torres A."/>
            <person name="Perez-Perez A."/>
            <person name="Purnelle B."/>
            <person name="Bent E."/>
            <person name="Johnson S."/>
            <person name="Tacon D."/>
            <person name="Jesse T."/>
            <person name="Heijnen L."/>
            <person name="Schwarz S."/>
            <person name="Scholler P."/>
            <person name="Heber S."/>
            <person name="Francs P."/>
            <person name="Bielke C."/>
            <person name="Frishman D."/>
            <person name="Haase D."/>
            <person name="Lemcke K."/>
            <person name="Mewes H.-W."/>
            <person name="Stocker S."/>
            <person name="Zaccaria P."/>
            <person name="Bevan M."/>
            <person name="Wilson R.K."/>
            <person name="de la Bastide M."/>
            <person name="Habermann K."/>
            <person name="Parnell L."/>
            <person name="Dedhia N."/>
            <person name="Gnoj L."/>
            <person name="Schutz K."/>
            <person name="Huang E."/>
            <person name="Spiegel L."/>
            <person name="Sekhon M."/>
            <person name="Murray J."/>
            <person name="Sheet P."/>
            <person name="Cordes M."/>
            <person name="Abu-Threideh J."/>
            <person name="Stoneking T."/>
            <person name="Kalicki J."/>
            <person name="Graves T."/>
            <person name="Harmon G."/>
            <person name="Edwards J."/>
            <person name="Latreille P."/>
            <person name="Courtney L."/>
            <person name="Cloud J."/>
            <person name="Abbott A."/>
            <person name="Scott K."/>
            <person name="Johnson D."/>
            <person name="Minx P."/>
            <person name="Bentley D."/>
            <person name="Fulton B."/>
            <person name="Miller N."/>
            <person name="Greco T."/>
            <person name="Kemp K."/>
            <person name="Kramer J."/>
            <person name="Fulton L."/>
            <person name="Mardis E."/>
            <person name="Dante M."/>
            <person name="Pepin K."/>
            <person name="Hillier L.W."/>
            <person name="Nelson J."/>
            <person name="Spieth J."/>
            <person name="Ryan E."/>
            <person name="Andrews S."/>
            <person name="Geisel C."/>
            <person name="Layman D."/>
            <person name="Du H."/>
            <person name="Ali J."/>
            <person name="Berghoff A."/>
            <person name="Jones K."/>
            <person name="Drone K."/>
            <person name="Cotton M."/>
            <person name="Joshu C."/>
            <person name="Antonoiu B."/>
            <person name="Zidanic M."/>
            <person name="Strong C."/>
            <person name="Sun H."/>
            <person name="Lamar B."/>
            <person name="Yordan C."/>
            <person name="Ma P."/>
            <person name="Zhong J."/>
            <person name="Preston R."/>
            <person name="Vil D."/>
            <person name="Shekher M."/>
            <person name="Matero A."/>
            <person name="Shah R."/>
            <person name="Swaby I.K."/>
            <person name="O'Shaughnessy A."/>
            <person name="Rodriguez M."/>
            <person name="Hoffman J."/>
            <person name="Till S."/>
            <person name="Granat S."/>
            <person name="Shohdy N."/>
            <person name="Hasegawa A."/>
            <person name="Hameed A."/>
            <person name="Lodhi M."/>
            <person name="Johnson A."/>
            <person name="Chen E."/>
            <person name="Marra M.A."/>
            <person name="Martienssen R."/>
            <person name="McCombie W.R."/>
        </authorList>
    </citation>
    <scope>NUCLEOTIDE SEQUENCE [LARGE SCALE GENOMIC DNA]</scope>
    <source>
        <strain>cv. Columbia</strain>
    </source>
</reference>
<reference key="2">
    <citation type="journal article" date="2017" name="Plant J.">
        <title>Araport11: a complete reannotation of the Arabidopsis thaliana reference genome.</title>
        <authorList>
            <person name="Cheng C.Y."/>
            <person name="Krishnakumar V."/>
            <person name="Chan A.P."/>
            <person name="Thibaud-Nissen F."/>
            <person name="Schobel S."/>
            <person name="Town C.D."/>
        </authorList>
    </citation>
    <scope>GENOME REANNOTATION</scope>
    <source>
        <strain>cv. Columbia</strain>
    </source>
</reference>
<reference key="3">
    <citation type="submission" date="2006-07" db="EMBL/GenBank/DDBJ databases">
        <title>Large-scale analysis of RIKEN Arabidopsis full-length (RAFL) cDNAs.</title>
        <authorList>
            <person name="Totoki Y."/>
            <person name="Seki M."/>
            <person name="Ishida J."/>
            <person name="Nakajima M."/>
            <person name="Enju A."/>
            <person name="Kamiya A."/>
            <person name="Narusaka M."/>
            <person name="Shin-i T."/>
            <person name="Nakagawa M."/>
            <person name="Sakamoto N."/>
            <person name="Oishi K."/>
            <person name="Kohara Y."/>
            <person name="Kobayashi M."/>
            <person name="Toyoda A."/>
            <person name="Sakaki Y."/>
            <person name="Sakurai T."/>
            <person name="Iida K."/>
            <person name="Akiyama K."/>
            <person name="Satou M."/>
            <person name="Toyoda T."/>
            <person name="Konagaya A."/>
            <person name="Carninci P."/>
            <person name="Kawai J."/>
            <person name="Hayashizaki Y."/>
            <person name="Shinozaki K."/>
        </authorList>
    </citation>
    <scope>NUCLEOTIDE SEQUENCE [LARGE SCALE MRNA]</scope>
    <source>
        <strain>cv. Columbia</strain>
    </source>
</reference>
<reference key="4">
    <citation type="journal article" date="2002" name="Plant Physiol.">
        <title>The cell wall-associated kinase (WAK) and WAK-like kinase gene family.</title>
        <authorList>
            <person name="Verica J.A."/>
            <person name="He Z.-H."/>
        </authorList>
    </citation>
    <scope>GENE FAMILY ORGANIZATION</scope>
</reference>
<feature type="signal peptide" evidence="3">
    <location>
        <begin position="1"/>
        <end position="28"/>
    </location>
</feature>
<feature type="chain" id="PRO_0000253318" description="Wall-associated receptor kinase-like 18">
    <location>
        <begin position="29"/>
        <end position="793"/>
    </location>
</feature>
<feature type="topological domain" description="Extracellular" evidence="3">
    <location>
        <begin position="29"/>
        <end position="378"/>
    </location>
</feature>
<feature type="transmembrane region" description="Helical" evidence="3">
    <location>
        <begin position="379"/>
        <end position="399"/>
    </location>
</feature>
<feature type="topological domain" description="Cytoplasmic" evidence="3">
    <location>
        <begin position="400"/>
        <end position="793"/>
    </location>
</feature>
<feature type="domain" description="Protein kinase" evidence="4">
    <location>
        <begin position="453"/>
        <end position="728"/>
    </location>
</feature>
<feature type="region of interest" description="Atypical EGF-like">
    <location>
        <begin position="312"/>
        <end position="371"/>
    </location>
</feature>
<feature type="region of interest" description="Disordered" evidence="6">
    <location>
        <begin position="733"/>
        <end position="757"/>
    </location>
</feature>
<feature type="compositionally biased region" description="Acidic residues" evidence="6">
    <location>
        <begin position="742"/>
        <end position="754"/>
    </location>
</feature>
<feature type="active site" description="Proton acceptor" evidence="4 5">
    <location>
        <position position="579"/>
    </location>
</feature>
<feature type="binding site" evidence="4">
    <location>
        <begin position="459"/>
        <end position="467"/>
    </location>
    <ligand>
        <name>ATP</name>
        <dbReference type="ChEBI" id="CHEBI:30616"/>
    </ligand>
</feature>
<feature type="binding site" evidence="4">
    <location>
        <position position="481"/>
    </location>
    <ligand>
        <name>ATP</name>
        <dbReference type="ChEBI" id="CHEBI:30616"/>
    </ligand>
</feature>
<feature type="modified residue" description="Phosphotyrosine" evidence="2">
    <location>
        <position position="526"/>
    </location>
</feature>
<feature type="modified residue" description="Phosphothreonine" evidence="2">
    <location>
        <position position="613"/>
    </location>
</feature>
<feature type="modified residue" description="Phosphothreonine" evidence="2">
    <location>
        <position position="618"/>
    </location>
</feature>
<feature type="modified residue" description="Phosphotyrosine" evidence="2">
    <location>
        <position position="626"/>
    </location>
</feature>
<feature type="glycosylation site" description="N-linked (GlcNAc...) asparagine" evidence="3">
    <location>
        <position position="60"/>
    </location>
</feature>
<feature type="glycosylation site" description="N-linked (GlcNAc...) asparagine" evidence="3">
    <location>
        <position position="130"/>
    </location>
</feature>
<feature type="glycosylation site" description="N-linked (GlcNAc...) asparagine" evidence="3">
    <location>
        <position position="170"/>
    </location>
</feature>
<feature type="glycosylation site" description="N-linked (GlcNAc...) asparagine" evidence="3">
    <location>
        <position position="238"/>
    </location>
</feature>
<feature type="glycosylation site" description="N-linked (GlcNAc...) asparagine" evidence="3">
    <location>
        <position position="285"/>
    </location>
</feature>
<feature type="glycosylation site" description="N-linked (GlcNAc...) asparagine" evidence="3">
    <location>
        <position position="304"/>
    </location>
</feature>
<feature type="disulfide bond" evidence="1">
    <location>
        <begin position="314"/>
        <end position="327"/>
    </location>
</feature>
<feature type="disulfide bond" evidence="1">
    <location>
        <begin position="349"/>
        <end position="362"/>
    </location>
</feature>
<feature type="disulfide bond" evidence="1">
    <location>
        <begin position="356"/>
        <end position="371"/>
    </location>
</feature>
<protein>
    <recommendedName>
        <fullName>Wall-associated receptor kinase-like 18</fullName>
        <ecNumber>2.7.11.-</ecNumber>
    </recommendedName>
</protein>
<comment type="function">
    <text>Serine/threonine-protein kinase that may function as a signaling receptor of extracellular matrix component.</text>
</comment>
<comment type="catalytic activity">
    <reaction>
        <text>L-seryl-[protein] + ATP = O-phospho-L-seryl-[protein] + ADP + H(+)</text>
        <dbReference type="Rhea" id="RHEA:17989"/>
        <dbReference type="Rhea" id="RHEA-COMP:9863"/>
        <dbReference type="Rhea" id="RHEA-COMP:11604"/>
        <dbReference type="ChEBI" id="CHEBI:15378"/>
        <dbReference type="ChEBI" id="CHEBI:29999"/>
        <dbReference type="ChEBI" id="CHEBI:30616"/>
        <dbReference type="ChEBI" id="CHEBI:83421"/>
        <dbReference type="ChEBI" id="CHEBI:456216"/>
    </reaction>
</comment>
<comment type="catalytic activity">
    <reaction>
        <text>L-threonyl-[protein] + ATP = O-phospho-L-threonyl-[protein] + ADP + H(+)</text>
        <dbReference type="Rhea" id="RHEA:46608"/>
        <dbReference type="Rhea" id="RHEA-COMP:11060"/>
        <dbReference type="Rhea" id="RHEA-COMP:11605"/>
        <dbReference type="ChEBI" id="CHEBI:15378"/>
        <dbReference type="ChEBI" id="CHEBI:30013"/>
        <dbReference type="ChEBI" id="CHEBI:30616"/>
        <dbReference type="ChEBI" id="CHEBI:61977"/>
        <dbReference type="ChEBI" id="CHEBI:456216"/>
    </reaction>
</comment>
<comment type="subcellular location">
    <subcellularLocation>
        <location evidence="7">Membrane</location>
        <topology evidence="7">Single-pass type I membrane protein</topology>
    </subcellularLocation>
</comment>
<comment type="domain">
    <text>The EGF-like region is specific to this family of proteins and seems to consist of the C-terminal of an EGF-like domain fused to the N-terminal of another one.</text>
</comment>
<comment type="similarity">
    <text evidence="4">Belongs to the protein kinase superfamily. Ser/Thr protein kinase family.</text>
</comment>
<comment type="sequence caution" evidence="7">
    <conflict type="erroneous gene model prediction">
        <sequence resource="EMBL-CDS" id="CAB79829"/>
    </conflict>
</comment>
<name>WAKLN_ARATH</name>
<gene>
    <name type="primary">WAKL18</name>
    <name type="ordered locus">At4g31110</name>
    <name type="ORF">F6E21.30</name>
</gene>
<accession>Q0WNY5</accession>
<accession>Q9M091</accession>
<proteinExistence type="evidence at transcript level"/>
<keyword id="KW-0067">ATP-binding</keyword>
<keyword id="KW-1015">Disulfide bond</keyword>
<keyword id="KW-0325">Glycoprotein</keyword>
<keyword id="KW-0418">Kinase</keyword>
<keyword id="KW-0472">Membrane</keyword>
<keyword id="KW-0547">Nucleotide-binding</keyword>
<keyword id="KW-0597">Phosphoprotein</keyword>
<keyword id="KW-1185">Reference proteome</keyword>
<keyword id="KW-0723">Serine/threonine-protein kinase</keyword>
<keyword id="KW-0732">Signal</keyword>
<keyword id="KW-0808">Transferase</keyword>
<keyword id="KW-0812">Transmembrane</keyword>
<keyword id="KW-1133">Transmembrane helix</keyword>